<proteinExistence type="evidence at transcript level"/>
<feature type="chain" id="PRO_0000237603" description="Probable fructokinase-3">
    <location>
        <begin position="1"/>
        <end position="345"/>
    </location>
</feature>
<evidence type="ECO:0000250" key="1">
    <source>
        <dbReference type="UniProtKB" id="Q6XZ79"/>
    </source>
</evidence>
<evidence type="ECO:0000305" key="2"/>
<evidence type="ECO:0000312" key="3">
    <source>
        <dbReference type="Araport" id="AT1G06020"/>
    </source>
</evidence>
<evidence type="ECO:0000312" key="4">
    <source>
        <dbReference type="EMBL" id="AAF80125.1"/>
    </source>
</evidence>
<gene>
    <name evidence="3" type="ordered locus">At1g06020</name>
    <name evidence="4" type="ORF">T21E18.7</name>
</gene>
<name>SCRK3_ARATH</name>
<sequence>MASSTGEKGLIVSFGEMLIDFVPTVSGVSLSESPGFLKAPGGAPANVAIAVSRLGGRAAFVGKLGDDDFGHMLAGILRKNGVDDQGINFDEGARTALAFVTLRSDGEREFMFYRNPSADMLLRPDELNLELIRSAKVFHYGSISLITEPCRSAHMKAMEVAKEAGALLSYDPNLREPLWPSPEEARTQIMSIWDKADIIKVSDVELEFLTENKTMDDKTAMSLWHPNLKLLLVTLGEKGCTYFTKKFHGSVETFHVDAVDTTGAGDSFVGALLQQIVDDQSVLEDEARLRKVLRFANACGAITTTKKGAIPALPTDIEALSFLKDQKKRQTNLKFSKWCCTASPC</sequence>
<protein>
    <recommendedName>
        <fullName>Probable fructokinase-3</fullName>
        <ecNumber>2.7.1.4</ecNumber>
    </recommendedName>
</protein>
<organism>
    <name type="scientific">Arabidopsis thaliana</name>
    <name type="common">Mouse-ear cress</name>
    <dbReference type="NCBI Taxonomy" id="3702"/>
    <lineage>
        <taxon>Eukaryota</taxon>
        <taxon>Viridiplantae</taxon>
        <taxon>Streptophyta</taxon>
        <taxon>Embryophyta</taxon>
        <taxon>Tracheophyta</taxon>
        <taxon>Spermatophyta</taxon>
        <taxon>Magnoliopsida</taxon>
        <taxon>eudicotyledons</taxon>
        <taxon>Gunneridae</taxon>
        <taxon>Pentapetalae</taxon>
        <taxon>rosids</taxon>
        <taxon>malvids</taxon>
        <taxon>Brassicales</taxon>
        <taxon>Brassicaceae</taxon>
        <taxon>Camelineae</taxon>
        <taxon>Arabidopsis</taxon>
    </lineage>
</organism>
<keyword id="KW-0067">ATP-binding</keyword>
<keyword id="KW-0119">Carbohydrate metabolism</keyword>
<keyword id="KW-0418">Kinase</keyword>
<keyword id="KW-0547">Nucleotide-binding</keyword>
<keyword id="KW-1185">Reference proteome</keyword>
<keyword id="KW-0808">Transferase</keyword>
<accession>Q9LNE4</accession>
<reference key="1">
    <citation type="journal article" date="2000" name="Nature">
        <title>Sequence and analysis of chromosome 1 of the plant Arabidopsis thaliana.</title>
        <authorList>
            <person name="Theologis A."/>
            <person name="Ecker J.R."/>
            <person name="Palm C.J."/>
            <person name="Federspiel N.A."/>
            <person name="Kaul S."/>
            <person name="White O."/>
            <person name="Alonso J."/>
            <person name="Altafi H."/>
            <person name="Araujo R."/>
            <person name="Bowman C.L."/>
            <person name="Brooks S.Y."/>
            <person name="Buehler E."/>
            <person name="Chan A."/>
            <person name="Chao Q."/>
            <person name="Chen H."/>
            <person name="Cheuk R.F."/>
            <person name="Chin C.W."/>
            <person name="Chung M.K."/>
            <person name="Conn L."/>
            <person name="Conway A.B."/>
            <person name="Conway A.R."/>
            <person name="Creasy T.H."/>
            <person name="Dewar K."/>
            <person name="Dunn P."/>
            <person name="Etgu P."/>
            <person name="Feldblyum T.V."/>
            <person name="Feng J.-D."/>
            <person name="Fong B."/>
            <person name="Fujii C.Y."/>
            <person name="Gill J.E."/>
            <person name="Goldsmith A.D."/>
            <person name="Haas B."/>
            <person name="Hansen N.F."/>
            <person name="Hughes B."/>
            <person name="Huizar L."/>
            <person name="Hunter J.L."/>
            <person name="Jenkins J."/>
            <person name="Johnson-Hopson C."/>
            <person name="Khan S."/>
            <person name="Khaykin E."/>
            <person name="Kim C.J."/>
            <person name="Koo H.L."/>
            <person name="Kremenetskaia I."/>
            <person name="Kurtz D.B."/>
            <person name="Kwan A."/>
            <person name="Lam B."/>
            <person name="Langin-Hooper S."/>
            <person name="Lee A."/>
            <person name="Lee J.M."/>
            <person name="Lenz C.A."/>
            <person name="Li J.H."/>
            <person name="Li Y.-P."/>
            <person name="Lin X."/>
            <person name="Liu S.X."/>
            <person name="Liu Z.A."/>
            <person name="Luros J.S."/>
            <person name="Maiti R."/>
            <person name="Marziali A."/>
            <person name="Militscher J."/>
            <person name="Miranda M."/>
            <person name="Nguyen M."/>
            <person name="Nierman W.C."/>
            <person name="Osborne B.I."/>
            <person name="Pai G."/>
            <person name="Peterson J."/>
            <person name="Pham P.K."/>
            <person name="Rizzo M."/>
            <person name="Rooney T."/>
            <person name="Rowley D."/>
            <person name="Sakano H."/>
            <person name="Salzberg S.L."/>
            <person name="Schwartz J.R."/>
            <person name="Shinn P."/>
            <person name="Southwick A.M."/>
            <person name="Sun H."/>
            <person name="Tallon L.J."/>
            <person name="Tambunga G."/>
            <person name="Toriumi M.J."/>
            <person name="Town C.D."/>
            <person name="Utterback T."/>
            <person name="Van Aken S."/>
            <person name="Vaysberg M."/>
            <person name="Vysotskaia V.S."/>
            <person name="Walker M."/>
            <person name="Wu D."/>
            <person name="Yu G."/>
            <person name="Fraser C.M."/>
            <person name="Venter J.C."/>
            <person name="Davis R.W."/>
        </authorList>
    </citation>
    <scope>NUCLEOTIDE SEQUENCE [LARGE SCALE GENOMIC DNA]</scope>
    <source>
        <strain>cv. Columbia</strain>
    </source>
</reference>
<reference key="2">
    <citation type="journal article" date="2017" name="Plant J.">
        <title>Araport11: a complete reannotation of the Arabidopsis thaliana reference genome.</title>
        <authorList>
            <person name="Cheng C.Y."/>
            <person name="Krishnakumar V."/>
            <person name="Chan A.P."/>
            <person name="Thibaud-Nissen F."/>
            <person name="Schobel S."/>
            <person name="Town C.D."/>
        </authorList>
    </citation>
    <scope>GENOME REANNOTATION</scope>
    <source>
        <strain>cv. Columbia</strain>
    </source>
</reference>
<reference key="3">
    <citation type="submission" date="2005-05" db="EMBL/GenBank/DDBJ databases">
        <authorList>
            <person name="Underwood B.A."/>
            <person name="Xiao Y.-L."/>
            <person name="Moskal W.A. Jr."/>
            <person name="Monaghan E.L."/>
            <person name="Wang W."/>
            <person name="Redman J.C."/>
            <person name="Wu H.C."/>
            <person name="Utterback T."/>
            <person name="Town C.D."/>
        </authorList>
    </citation>
    <scope>NUCLEOTIDE SEQUENCE [LARGE SCALE MRNA]</scope>
    <source>
        <strain>cv. Columbia</strain>
    </source>
</reference>
<dbReference type="EC" id="2.7.1.4"/>
<dbReference type="EMBL" id="AC024174">
    <property type="protein sequence ID" value="AAF80125.1"/>
    <property type="molecule type" value="Genomic_DNA"/>
</dbReference>
<dbReference type="EMBL" id="CP002684">
    <property type="protein sequence ID" value="AEE27930.1"/>
    <property type="molecule type" value="Genomic_DNA"/>
</dbReference>
<dbReference type="EMBL" id="DQ056446">
    <property type="protein sequence ID" value="AAY78603.1"/>
    <property type="molecule type" value="mRNA"/>
</dbReference>
<dbReference type="PIR" id="C86195">
    <property type="entry name" value="C86195"/>
</dbReference>
<dbReference type="RefSeq" id="NP_172092.1">
    <property type="nucleotide sequence ID" value="NM_100482.2"/>
</dbReference>
<dbReference type="SMR" id="Q9LNE4"/>
<dbReference type="BioGRID" id="22353">
    <property type="interactions" value="5"/>
</dbReference>
<dbReference type="FunCoup" id="Q9LNE4">
    <property type="interactions" value="322"/>
</dbReference>
<dbReference type="STRING" id="3702.Q9LNE4"/>
<dbReference type="PaxDb" id="3702-AT1G06020.1"/>
<dbReference type="ProteomicsDB" id="232773"/>
<dbReference type="EnsemblPlants" id="AT1G06020.1">
    <property type="protein sequence ID" value="AT1G06020.1"/>
    <property type="gene ID" value="AT1G06020"/>
</dbReference>
<dbReference type="GeneID" id="837111"/>
<dbReference type="Gramene" id="AT1G06020.1">
    <property type="protein sequence ID" value="AT1G06020.1"/>
    <property type="gene ID" value="AT1G06020"/>
</dbReference>
<dbReference type="KEGG" id="ath:AT1G06020"/>
<dbReference type="Araport" id="AT1G06020"/>
<dbReference type="TAIR" id="AT1G06020">
    <property type="gene designation" value="FRK5"/>
</dbReference>
<dbReference type="eggNOG" id="KOG2855">
    <property type="taxonomic scope" value="Eukaryota"/>
</dbReference>
<dbReference type="HOGENOM" id="CLU_027634_6_1_1"/>
<dbReference type="InParanoid" id="Q9LNE4"/>
<dbReference type="OMA" id="GCTYFTK"/>
<dbReference type="OrthoDB" id="415590at2759"/>
<dbReference type="PhylomeDB" id="Q9LNE4"/>
<dbReference type="BioCyc" id="ARA:AT1G06020-MONOMER"/>
<dbReference type="BRENDA" id="2.7.1.4">
    <property type="organism ID" value="399"/>
</dbReference>
<dbReference type="UniPathway" id="UPA00152"/>
<dbReference type="PRO" id="PR:Q9LNE4"/>
<dbReference type="Proteomes" id="UP000006548">
    <property type="component" value="Chromosome 1"/>
</dbReference>
<dbReference type="ExpressionAtlas" id="Q9LNE4">
    <property type="expression patterns" value="baseline and differential"/>
</dbReference>
<dbReference type="GO" id="GO:0005829">
    <property type="term" value="C:cytosol"/>
    <property type="evidence" value="ECO:0000314"/>
    <property type="project" value="TAIR"/>
</dbReference>
<dbReference type="GO" id="GO:0005576">
    <property type="term" value="C:extracellular region"/>
    <property type="evidence" value="ECO:0007005"/>
    <property type="project" value="TAIR"/>
</dbReference>
<dbReference type="GO" id="GO:0005524">
    <property type="term" value="F:ATP binding"/>
    <property type="evidence" value="ECO:0007669"/>
    <property type="project" value="UniProtKB-KW"/>
</dbReference>
<dbReference type="GO" id="GO:0008865">
    <property type="term" value="F:fructokinase activity"/>
    <property type="evidence" value="ECO:0000314"/>
    <property type="project" value="TAIR"/>
</dbReference>
<dbReference type="GO" id="GO:0006000">
    <property type="term" value="P:fructose metabolic process"/>
    <property type="evidence" value="ECO:0000314"/>
    <property type="project" value="TAIR"/>
</dbReference>
<dbReference type="GO" id="GO:0019252">
    <property type="term" value="P:starch biosynthetic process"/>
    <property type="evidence" value="ECO:0007669"/>
    <property type="project" value="UniProtKB-UniPathway"/>
</dbReference>
<dbReference type="CDD" id="cd01167">
    <property type="entry name" value="bac_FRK"/>
    <property type="match status" value="1"/>
</dbReference>
<dbReference type="FunFam" id="3.40.1190.20:FF:000005">
    <property type="entry name" value="Probable fructokinase-2"/>
    <property type="match status" value="1"/>
</dbReference>
<dbReference type="Gene3D" id="3.40.1190.20">
    <property type="match status" value="1"/>
</dbReference>
<dbReference type="InterPro" id="IPR002173">
    <property type="entry name" value="Carboh/pur_kinase_PfkB_CS"/>
</dbReference>
<dbReference type="InterPro" id="IPR050306">
    <property type="entry name" value="PfkB_Carbo_kinase"/>
</dbReference>
<dbReference type="InterPro" id="IPR011611">
    <property type="entry name" value="PfkB_dom"/>
</dbReference>
<dbReference type="InterPro" id="IPR002139">
    <property type="entry name" value="Ribo/fructo_kinase"/>
</dbReference>
<dbReference type="InterPro" id="IPR029056">
    <property type="entry name" value="Ribokinase-like"/>
</dbReference>
<dbReference type="PANTHER" id="PTHR43085:SF47">
    <property type="entry name" value="FRUCTOKINASE-2-RELATED"/>
    <property type="match status" value="1"/>
</dbReference>
<dbReference type="PANTHER" id="PTHR43085">
    <property type="entry name" value="HEXOKINASE FAMILY MEMBER"/>
    <property type="match status" value="1"/>
</dbReference>
<dbReference type="Pfam" id="PF00294">
    <property type="entry name" value="PfkB"/>
    <property type="match status" value="1"/>
</dbReference>
<dbReference type="PRINTS" id="PR00990">
    <property type="entry name" value="RIBOKINASE"/>
</dbReference>
<dbReference type="SUPFAM" id="SSF53613">
    <property type="entry name" value="Ribokinase-like"/>
    <property type="match status" value="1"/>
</dbReference>
<dbReference type="PROSITE" id="PS00583">
    <property type="entry name" value="PFKB_KINASES_1"/>
    <property type="match status" value="1"/>
</dbReference>
<dbReference type="PROSITE" id="PS00584">
    <property type="entry name" value="PFKB_KINASES_2"/>
    <property type="match status" value="1"/>
</dbReference>
<comment type="function">
    <text evidence="1">May play an important role in maintaining the flux of carbon towards starch formation.</text>
</comment>
<comment type="catalytic activity">
    <reaction>
        <text>D-fructose + ATP = D-fructose 6-phosphate + ADP + H(+)</text>
        <dbReference type="Rhea" id="RHEA:16125"/>
        <dbReference type="ChEBI" id="CHEBI:15378"/>
        <dbReference type="ChEBI" id="CHEBI:30616"/>
        <dbReference type="ChEBI" id="CHEBI:37721"/>
        <dbReference type="ChEBI" id="CHEBI:61527"/>
        <dbReference type="ChEBI" id="CHEBI:456216"/>
        <dbReference type="EC" id="2.7.1.4"/>
    </reaction>
</comment>
<comment type="pathway">
    <text>Glycan biosynthesis; starch biosynthesis.</text>
</comment>
<comment type="similarity">
    <text evidence="2">Belongs to the carbohydrate kinase PfkB family.</text>
</comment>